<feature type="chain" id="PRO_0000416833" description="Aminoglycoside N(6')-acetyltransferase type 1">
    <location>
        <begin position="1"/>
        <end position="146"/>
    </location>
</feature>
<feature type="domain" description="N-acetyltransferase" evidence="3">
    <location>
        <begin position="1"/>
        <end position="146"/>
    </location>
</feature>
<feature type="binding site" evidence="2">
    <location>
        <position position="22"/>
    </location>
    <ligand>
        <name>substrate</name>
    </ligand>
</feature>
<feature type="binding site" evidence="2">
    <location>
        <position position="25"/>
    </location>
    <ligand>
        <name>substrate</name>
    </ligand>
</feature>
<feature type="binding site" evidence="2">
    <location>
        <position position="66"/>
    </location>
    <ligand>
        <name>substrate</name>
    </ligand>
</feature>
<feature type="binding site" evidence="2">
    <location>
        <position position="79"/>
    </location>
    <ligand>
        <name>substrate</name>
    </ligand>
</feature>
<feature type="binding site" evidence="2">
    <location>
        <begin position="81"/>
        <end position="83"/>
    </location>
    <ligand>
        <name>acetyl-CoA</name>
        <dbReference type="ChEBI" id="CHEBI:57288"/>
    </ligand>
</feature>
<feature type="binding site" evidence="2">
    <location>
        <position position="115"/>
    </location>
    <ligand>
        <name>substrate</name>
    </ligand>
</feature>
<feature type="binding site" evidence="2">
    <location>
        <position position="120"/>
    </location>
    <ligand>
        <name>acetyl-CoA</name>
        <dbReference type="ChEBI" id="CHEBI:57288"/>
    </ligand>
</feature>
<feature type="binding site" evidence="2">
    <location>
        <position position="136"/>
    </location>
    <ligand>
        <name>substrate</name>
    </ligand>
</feature>
<feature type="strand" evidence="8">
    <location>
        <begin position="2"/>
        <end position="5"/>
    </location>
</feature>
<feature type="helix" evidence="8">
    <location>
        <begin position="11"/>
        <end position="21"/>
    </location>
</feature>
<feature type="helix" evidence="8">
    <location>
        <begin position="26"/>
        <end position="37"/>
    </location>
</feature>
<feature type="strand" evidence="8">
    <location>
        <begin position="42"/>
        <end position="48"/>
    </location>
</feature>
<feature type="strand" evidence="8">
    <location>
        <begin position="54"/>
        <end position="63"/>
    </location>
</feature>
<feature type="strand" evidence="8">
    <location>
        <begin position="72"/>
        <end position="83"/>
    </location>
</feature>
<feature type="helix" evidence="8">
    <location>
        <begin position="85"/>
        <end position="90"/>
    </location>
</feature>
<feature type="helix" evidence="8">
    <location>
        <begin position="92"/>
        <end position="105"/>
    </location>
</feature>
<feature type="turn" evidence="8">
    <location>
        <begin position="106"/>
        <end position="108"/>
    </location>
</feature>
<feature type="strand" evidence="8">
    <location>
        <begin position="111"/>
        <end position="117"/>
    </location>
</feature>
<feature type="helix" evidence="8">
    <location>
        <begin position="121"/>
        <end position="129"/>
    </location>
</feature>
<feature type="strand" evidence="8">
    <location>
        <begin position="133"/>
        <end position="144"/>
    </location>
</feature>
<protein>
    <recommendedName>
        <fullName evidence="5">Aminoglycoside N(6')-acetyltransferase type 1</fullName>
        <ecNumber evidence="4">2.3.1.82</ecNumber>
    </recommendedName>
    <alternativeName>
        <fullName evidence="7">AAC(6')-Ih</fullName>
    </alternativeName>
    <alternativeName>
        <fullName evidence="1">Aminoglycoside resistance protein</fullName>
    </alternativeName>
</protein>
<name>AAC6_ACIBA</name>
<reference evidence="6 7" key="1">
    <citation type="journal article" date="1994" name="Antimicrob. Agents Chemother.">
        <title>Characterization of the chromosomal aac(6')-Ij gene of Acinetobacter sp. 13 and the aac(6')-Ih plasmid gene of Acinetobacter baumannii.</title>
        <authorList>
            <person name="Lambert T."/>
            <person name="Gerbaud G."/>
            <person name="Courvalin P."/>
        </authorList>
    </citation>
    <scope>NUCLEOTIDE SEQUENCE [GENOMIC DNA]</scope>
    <scope>FUNCTION</scope>
    <scope>CATALYTIC ACTIVITY</scope>
    <scope>SUBSTRATE SPECIFICITY</scope>
    <source>
        <strain evidence="7">BM2686</strain>
        <plasmid>pIP1858</plasmid>
    </source>
</reference>
<keyword id="KW-0002">3D-structure</keyword>
<keyword id="KW-0012">Acyltransferase</keyword>
<keyword id="KW-0046">Antibiotic resistance</keyword>
<keyword id="KW-0614">Plasmid</keyword>
<keyword id="KW-0808">Transferase</keyword>
<evidence type="ECO:0000250" key="1">
    <source>
        <dbReference type="UniProtKB" id="P50858"/>
    </source>
</evidence>
<evidence type="ECO:0000250" key="2">
    <source>
        <dbReference type="UniProtKB" id="Q9R381"/>
    </source>
</evidence>
<evidence type="ECO:0000255" key="3">
    <source>
        <dbReference type="PROSITE-ProRule" id="PRU00532"/>
    </source>
</evidence>
<evidence type="ECO:0000269" key="4">
    <source>
    </source>
</evidence>
<evidence type="ECO:0000303" key="5">
    <source>
    </source>
</evidence>
<evidence type="ECO:0000305" key="6"/>
<evidence type="ECO:0000312" key="7">
    <source>
        <dbReference type="EMBL" id="AAC41391.1"/>
    </source>
</evidence>
<evidence type="ECO:0007829" key="8">
    <source>
        <dbReference type="PDB" id="4E8O"/>
    </source>
</evidence>
<geneLocation type="plasmid" evidence="4">
    <name>pIP1858</name>
</geneLocation>
<sequence>MNIMPISESQLSDWLALRCLLWPDHEDVHLQEMRQLITQAHRLQLLAYTDTQQAIAMLEASIRYEYVNGTQTSPVAFLEGIFVLPEYRRSGIATGLVQQVEIWAKQFACTEFASDAALDNQISHAMHQALGFHETERVVYFKKNIG</sequence>
<dbReference type="EC" id="2.3.1.82" evidence="4"/>
<dbReference type="EMBL" id="L29044">
    <property type="protein sequence ID" value="AAC41391.1"/>
    <property type="molecule type" value="Genomic_DNA"/>
</dbReference>
<dbReference type="PIR" id="I39503">
    <property type="entry name" value="I39503"/>
</dbReference>
<dbReference type="RefSeq" id="WP_016541245.1">
    <property type="nucleotide sequence ID" value="NZ_KP890934.1"/>
</dbReference>
<dbReference type="PDB" id="4E8O">
    <property type="method" value="X-ray"/>
    <property type="resolution" value="2.14 A"/>
    <property type="chains" value="A/B=1-146"/>
</dbReference>
<dbReference type="PDBsum" id="4E8O"/>
<dbReference type="SMR" id="Q43899"/>
<dbReference type="CARD" id="ARO:3002555">
    <property type="molecule name" value="AAC(6')-Ih"/>
    <property type="mechanism identifier" value="ARO:0001004"/>
    <property type="mechanism name" value="antibiotic inactivation"/>
</dbReference>
<dbReference type="KEGG" id="ag:AAC41391"/>
<dbReference type="BRENDA" id="2.3.1.82">
    <property type="organism ID" value="98"/>
</dbReference>
<dbReference type="EvolutionaryTrace" id="Q43899"/>
<dbReference type="GO" id="GO:0047663">
    <property type="term" value="F:aminoglycoside 6'-N-acetyltransferase activity"/>
    <property type="evidence" value="ECO:0000314"/>
    <property type="project" value="UniProtKB"/>
</dbReference>
<dbReference type="GO" id="GO:0046677">
    <property type="term" value="P:response to antibiotic"/>
    <property type="evidence" value="ECO:0000314"/>
    <property type="project" value="UniProtKB"/>
</dbReference>
<dbReference type="CDD" id="cd04301">
    <property type="entry name" value="NAT_SF"/>
    <property type="match status" value="1"/>
</dbReference>
<dbReference type="FunFam" id="3.40.630.30:FF:000071">
    <property type="entry name" value="Acetyltransf_1"/>
    <property type="match status" value="1"/>
</dbReference>
<dbReference type="Gene3D" id="3.40.630.30">
    <property type="match status" value="1"/>
</dbReference>
<dbReference type="InterPro" id="IPR016181">
    <property type="entry name" value="Acyl_CoA_acyltransferase"/>
</dbReference>
<dbReference type="InterPro" id="IPR024170">
    <property type="entry name" value="Aminoglycoside_N6-AcTrfrase"/>
</dbReference>
<dbReference type="InterPro" id="IPR000182">
    <property type="entry name" value="GNAT_dom"/>
</dbReference>
<dbReference type="NCBIfam" id="NF000224">
    <property type="entry name" value="AAC_6p_Acine"/>
    <property type="match status" value="1"/>
</dbReference>
<dbReference type="NCBIfam" id="NF043067">
    <property type="entry name" value="AAC_6p_group_E"/>
    <property type="match status" value="1"/>
</dbReference>
<dbReference type="Pfam" id="PF00583">
    <property type="entry name" value="Acetyltransf_1"/>
    <property type="match status" value="1"/>
</dbReference>
<dbReference type="PIRSF" id="PIRSF000452">
    <property type="entry name" value="6-N-acetyltransf"/>
    <property type="match status" value="1"/>
</dbReference>
<dbReference type="SUPFAM" id="SSF55729">
    <property type="entry name" value="Acyl-CoA N-acyltransferases (Nat)"/>
    <property type="match status" value="1"/>
</dbReference>
<dbReference type="PROSITE" id="PS51186">
    <property type="entry name" value="GNAT"/>
    <property type="match status" value="1"/>
</dbReference>
<organism>
    <name type="scientific">Acinetobacter baumannii</name>
    <dbReference type="NCBI Taxonomy" id="470"/>
    <lineage>
        <taxon>Bacteria</taxon>
        <taxon>Pseudomonadati</taxon>
        <taxon>Pseudomonadota</taxon>
        <taxon>Gammaproteobacteria</taxon>
        <taxon>Moraxellales</taxon>
        <taxon>Moraxellaceae</taxon>
        <taxon>Acinetobacter</taxon>
        <taxon>Acinetobacter calcoaceticus/baumannii complex</taxon>
    </lineage>
</organism>
<proteinExistence type="evidence at protein level"/>
<accession>Q43899</accession>
<comment type="function">
    <text evidence="4">Catalyzes the transfer of an acetyl group from acetyl-CoA to the 6'-amino group of aminoglycoside molecules conferring resistance to antibiotics containing the purpurosamine ring including amikacin, kanamycin, tobramycin and netilmicin.</text>
</comment>
<comment type="catalytic activity">
    <reaction evidence="4">
        <text>kanamycin B + acetyl-CoA = N(6')-acetylkanamycin B + CoA + H(+)</text>
        <dbReference type="Rhea" id="RHEA:16449"/>
        <dbReference type="ChEBI" id="CHEBI:15378"/>
        <dbReference type="ChEBI" id="CHEBI:57287"/>
        <dbReference type="ChEBI" id="CHEBI:57288"/>
        <dbReference type="ChEBI" id="CHEBI:58390"/>
        <dbReference type="ChEBI" id="CHEBI:58549"/>
        <dbReference type="EC" id="2.3.1.82"/>
    </reaction>
</comment>
<comment type="subunit">
    <text evidence="2">Homodimer.</text>
</comment>